<comment type="function">
    <text evidence="1">Catalyzes the first step in hexosamine metabolism, converting fructose-6P into glucosamine-6P using glutamine as a nitrogen source.</text>
</comment>
<comment type="catalytic activity">
    <reaction evidence="1">
        <text>D-fructose 6-phosphate + L-glutamine = D-glucosamine 6-phosphate + L-glutamate</text>
        <dbReference type="Rhea" id="RHEA:13237"/>
        <dbReference type="ChEBI" id="CHEBI:29985"/>
        <dbReference type="ChEBI" id="CHEBI:58359"/>
        <dbReference type="ChEBI" id="CHEBI:58725"/>
        <dbReference type="ChEBI" id="CHEBI:61527"/>
        <dbReference type="EC" id="2.6.1.16"/>
    </reaction>
</comment>
<comment type="subunit">
    <text evidence="1">Homodimer.</text>
</comment>
<comment type="subcellular location">
    <subcellularLocation>
        <location evidence="1">Cytoplasm</location>
    </subcellularLocation>
</comment>
<evidence type="ECO:0000255" key="1">
    <source>
        <dbReference type="HAMAP-Rule" id="MF_00164"/>
    </source>
</evidence>
<keyword id="KW-0032">Aminotransferase</keyword>
<keyword id="KW-0963">Cytoplasm</keyword>
<keyword id="KW-0315">Glutamine amidotransferase</keyword>
<keyword id="KW-1185">Reference proteome</keyword>
<keyword id="KW-0677">Repeat</keyword>
<keyword id="KW-0808">Transferase</keyword>
<feature type="initiator methionine" description="Removed" evidence="1">
    <location>
        <position position="1"/>
    </location>
</feature>
<feature type="chain" id="PRO_0000135389" description="Glutamine--fructose-6-phosphate aminotransferase [isomerizing]">
    <location>
        <begin position="2"/>
        <end position="615"/>
    </location>
</feature>
<feature type="domain" description="Glutamine amidotransferase type-2" evidence="1">
    <location>
        <begin position="2"/>
        <end position="220"/>
    </location>
</feature>
<feature type="domain" description="SIS 1" evidence="1">
    <location>
        <begin position="287"/>
        <end position="427"/>
    </location>
</feature>
<feature type="domain" description="SIS 2" evidence="1">
    <location>
        <begin position="460"/>
        <end position="605"/>
    </location>
</feature>
<feature type="active site" description="Nucleophile; for GATase activity" evidence="1">
    <location>
        <position position="2"/>
    </location>
</feature>
<feature type="active site" description="For Fru-6P isomerization activity" evidence="1">
    <location>
        <position position="610"/>
    </location>
</feature>
<accession>O86781</accession>
<organism>
    <name type="scientific">Streptomyces coelicolor (strain ATCC BAA-471 / A3(2) / M145)</name>
    <dbReference type="NCBI Taxonomy" id="100226"/>
    <lineage>
        <taxon>Bacteria</taxon>
        <taxon>Bacillati</taxon>
        <taxon>Actinomycetota</taxon>
        <taxon>Actinomycetes</taxon>
        <taxon>Kitasatosporales</taxon>
        <taxon>Streptomycetaceae</taxon>
        <taxon>Streptomyces</taxon>
        <taxon>Streptomyces albidoflavus group</taxon>
    </lineage>
</organism>
<sequence>MCGIVGYVGPQSALDVVMAGLKRLEYRGYDSAGVAVLADGGLATAKRAGKLVNLDKELSEHPLPAAATGIGHTRWATHGGPTDANAHPHLDNAGRVAVVHNGIIENFAPLRAELAERGHELPSETDTEVVAHLLAEEYSACADLAEAMRLVCGRLEGAFTLVAVHADAPDVVVGARRNSPLVVGVGEGEYFLASDVAAFIAHTRDAVELGQDQVVELRRDGVRVTGFDGSPADVRSYHVDWDASAAEKCGYASFMLKEIAEQPKAVADTLLGRIDGSGTLSLDEVRIPPGVLREVDKVVVVACGTAFHAGLIAKYAIEHWTRIPCEVELASEFRYRDPILDQQTLVVAISQSGETMDTLMALRHAREQGARVLAICNTNGSTIPRESDAVLYTHAGPEVAVASTKAFLTQLVACYLVALYLGQVRGTKYGDEIGDVVRDLSGISGAVERVLGTMDPVRQLARSLAHKNTVLFLGRHVGHPVALEGALKLKELAYMHAEGFAAGELKHGPIALIEEDLPVVVVVPSPRGRSVLHDKIVSNIQEIRARGARTIVIAEEGDEAVVPYADHLVRIPATPTLLQPLVATVPLQVFACELATARGNEVDQPRNLAKSVTVE</sequence>
<gene>
    <name evidence="1" type="primary">glmS</name>
    <name type="ordered locus">SCO4740</name>
    <name type="ORF">SC6G4.18</name>
</gene>
<proteinExistence type="inferred from homology"/>
<reference key="1">
    <citation type="journal article" date="2002" name="Nature">
        <title>Complete genome sequence of the model actinomycete Streptomyces coelicolor A3(2).</title>
        <authorList>
            <person name="Bentley S.D."/>
            <person name="Chater K.F."/>
            <person name="Cerdeno-Tarraga A.-M."/>
            <person name="Challis G.L."/>
            <person name="Thomson N.R."/>
            <person name="James K.D."/>
            <person name="Harris D.E."/>
            <person name="Quail M.A."/>
            <person name="Kieser H."/>
            <person name="Harper D."/>
            <person name="Bateman A."/>
            <person name="Brown S."/>
            <person name="Chandra G."/>
            <person name="Chen C.W."/>
            <person name="Collins M."/>
            <person name="Cronin A."/>
            <person name="Fraser A."/>
            <person name="Goble A."/>
            <person name="Hidalgo J."/>
            <person name="Hornsby T."/>
            <person name="Howarth S."/>
            <person name="Huang C.-H."/>
            <person name="Kieser T."/>
            <person name="Larke L."/>
            <person name="Murphy L.D."/>
            <person name="Oliver K."/>
            <person name="O'Neil S."/>
            <person name="Rabbinowitsch E."/>
            <person name="Rajandream M.A."/>
            <person name="Rutherford K.M."/>
            <person name="Rutter S."/>
            <person name="Seeger K."/>
            <person name="Saunders D."/>
            <person name="Sharp S."/>
            <person name="Squares R."/>
            <person name="Squares S."/>
            <person name="Taylor K."/>
            <person name="Warren T."/>
            <person name="Wietzorrek A."/>
            <person name="Woodward J.R."/>
            <person name="Barrell B.G."/>
            <person name="Parkhill J."/>
            <person name="Hopwood D.A."/>
        </authorList>
    </citation>
    <scope>NUCLEOTIDE SEQUENCE [LARGE SCALE GENOMIC DNA]</scope>
    <source>
        <strain>ATCC BAA-471 / A3(2) / M145</strain>
    </source>
</reference>
<protein>
    <recommendedName>
        <fullName evidence="1">Glutamine--fructose-6-phosphate aminotransferase [isomerizing]</fullName>
        <ecNumber evidence="1">2.6.1.16</ecNumber>
    </recommendedName>
    <alternativeName>
        <fullName evidence="1">D-fructose-6-phosphate amidotransferase</fullName>
    </alternativeName>
    <alternativeName>
        <fullName evidence="1">GFAT</fullName>
    </alternativeName>
    <alternativeName>
        <fullName evidence="1">Glucosamine-6-phosphate synthase</fullName>
    </alternativeName>
    <alternativeName>
        <fullName evidence="1">Hexosephosphate aminotransferase</fullName>
    </alternativeName>
    <alternativeName>
        <fullName evidence="1">L-glutamine--D-fructose-6-phosphate amidotransferase</fullName>
    </alternativeName>
</protein>
<dbReference type="EC" id="2.6.1.16" evidence="1"/>
<dbReference type="EMBL" id="AL939121">
    <property type="protein sequence ID" value="CAA20396.1"/>
    <property type="molecule type" value="Genomic_DNA"/>
</dbReference>
<dbReference type="PIR" id="T35569">
    <property type="entry name" value="T35569"/>
</dbReference>
<dbReference type="RefSeq" id="NP_628898.1">
    <property type="nucleotide sequence ID" value="NC_003888.3"/>
</dbReference>
<dbReference type="RefSeq" id="WP_003974233.1">
    <property type="nucleotide sequence ID" value="NZ_VNID01000016.1"/>
</dbReference>
<dbReference type="SMR" id="O86781"/>
<dbReference type="FunCoup" id="O86781">
    <property type="interactions" value="282"/>
</dbReference>
<dbReference type="STRING" id="100226.gene:17762389"/>
<dbReference type="PaxDb" id="100226-SCO4740"/>
<dbReference type="KEGG" id="sco:SCO4740"/>
<dbReference type="PATRIC" id="fig|100226.15.peg.4812"/>
<dbReference type="eggNOG" id="COG0449">
    <property type="taxonomic scope" value="Bacteria"/>
</dbReference>
<dbReference type="HOGENOM" id="CLU_012520_5_2_11"/>
<dbReference type="InParanoid" id="O86781"/>
<dbReference type="OrthoDB" id="9761808at2"/>
<dbReference type="PhylomeDB" id="O86781"/>
<dbReference type="Proteomes" id="UP000001973">
    <property type="component" value="Chromosome"/>
</dbReference>
<dbReference type="GO" id="GO:0005829">
    <property type="term" value="C:cytosol"/>
    <property type="evidence" value="ECO:0000318"/>
    <property type="project" value="GO_Central"/>
</dbReference>
<dbReference type="GO" id="GO:0097367">
    <property type="term" value="F:carbohydrate derivative binding"/>
    <property type="evidence" value="ECO:0007669"/>
    <property type="project" value="InterPro"/>
</dbReference>
<dbReference type="GO" id="GO:0004360">
    <property type="term" value="F:glutamine-fructose-6-phosphate transaminase (isomerizing) activity"/>
    <property type="evidence" value="ECO:0000318"/>
    <property type="project" value="GO_Central"/>
</dbReference>
<dbReference type="GO" id="GO:0005975">
    <property type="term" value="P:carbohydrate metabolic process"/>
    <property type="evidence" value="ECO:0007669"/>
    <property type="project" value="UniProtKB-UniRule"/>
</dbReference>
<dbReference type="GO" id="GO:0006002">
    <property type="term" value="P:fructose 6-phosphate metabolic process"/>
    <property type="evidence" value="ECO:0000318"/>
    <property type="project" value="GO_Central"/>
</dbReference>
<dbReference type="GO" id="GO:0006487">
    <property type="term" value="P:protein N-linked glycosylation"/>
    <property type="evidence" value="ECO:0000318"/>
    <property type="project" value="GO_Central"/>
</dbReference>
<dbReference type="GO" id="GO:0006047">
    <property type="term" value="P:UDP-N-acetylglucosamine metabolic process"/>
    <property type="evidence" value="ECO:0000318"/>
    <property type="project" value="GO_Central"/>
</dbReference>
<dbReference type="CDD" id="cd00714">
    <property type="entry name" value="GFAT"/>
    <property type="match status" value="1"/>
</dbReference>
<dbReference type="CDD" id="cd05008">
    <property type="entry name" value="SIS_GlmS_GlmD_1"/>
    <property type="match status" value="1"/>
</dbReference>
<dbReference type="CDD" id="cd05009">
    <property type="entry name" value="SIS_GlmS_GlmD_2"/>
    <property type="match status" value="1"/>
</dbReference>
<dbReference type="FunFam" id="3.40.50.10490:FF:000019">
    <property type="entry name" value="Glutamine--fructose-6-phosphate aminotransferase [isomerizing]"/>
    <property type="match status" value="1"/>
</dbReference>
<dbReference type="FunFam" id="3.60.20.10:FF:000006">
    <property type="entry name" value="Glutamine--fructose-6-phosphate aminotransferase [isomerizing]"/>
    <property type="match status" value="1"/>
</dbReference>
<dbReference type="Gene3D" id="3.40.50.10490">
    <property type="entry name" value="Glucose-6-phosphate isomerase like protein, domain 1"/>
    <property type="match status" value="2"/>
</dbReference>
<dbReference type="Gene3D" id="3.60.20.10">
    <property type="entry name" value="Glutamine Phosphoribosylpyrophosphate, subunit 1, domain 1"/>
    <property type="match status" value="1"/>
</dbReference>
<dbReference type="HAMAP" id="MF_00164">
    <property type="entry name" value="GlmS"/>
    <property type="match status" value="1"/>
</dbReference>
<dbReference type="InterPro" id="IPR017932">
    <property type="entry name" value="GATase_2_dom"/>
</dbReference>
<dbReference type="InterPro" id="IPR005855">
    <property type="entry name" value="GFAT"/>
</dbReference>
<dbReference type="InterPro" id="IPR047084">
    <property type="entry name" value="GFAT_N"/>
</dbReference>
<dbReference type="InterPro" id="IPR035466">
    <property type="entry name" value="GlmS/AgaS_SIS"/>
</dbReference>
<dbReference type="InterPro" id="IPR035490">
    <property type="entry name" value="GlmS/FrlB_SIS"/>
</dbReference>
<dbReference type="InterPro" id="IPR029055">
    <property type="entry name" value="Ntn_hydrolases_N"/>
</dbReference>
<dbReference type="InterPro" id="IPR001347">
    <property type="entry name" value="SIS_dom"/>
</dbReference>
<dbReference type="InterPro" id="IPR046348">
    <property type="entry name" value="SIS_dom_sf"/>
</dbReference>
<dbReference type="NCBIfam" id="TIGR01135">
    <property type="entry name" value="glmS"/>
    <property type="match status" value="1"/>
</dbReference>
<dbReference type="NCBIfam" id="NF001484">
    <property type="entry name" value="PRK00331.1"/>
    <property type="match status" value="1"/>
</dbReference>
<dbReference type="PANTHER" id="PTHR10937">
    <property type="entry name" value="GLUCOSAMINE--FRUCTOSE-6-PHOSPHATE AMINOTRANSFERASE, ISOMERIZING"/>
    <property type="match status" value="1"/>
</dbReference>
<dbReference type="PANTHER" id="PTHR10937:SF0">
    <property type="entry name" value="GLUTAMINE--FRUCTOSE-6-PHOSPHATE TRANSAMINASE (ISOMERIZING)"/>
    <property type="match status" value="1"/>
</dbReference>
<dbReference type="Pfam" id="PF13522">
    <property type="entry name" value="GATase_6"/>
    <property type="match status" value="1"/>
</dbReference>
<dbReference type="Pfam" id="PF01380">
    <property type="entry name" value="SIS"/>
    <property type="match status" value="2"/>
</dbReference>
<dbReference type="SUPFAM" id="SSF56235">
    <property type="entry name" value="N-terminal nucleophile aminohydrolases (Ntn hydrolases)"/>
    <property type="match status" value="1"/>
</dbReference>
<dbReference type="SUPFAM" id="SSF53697">
    <property type="entry name" value="SIS domain"/>
    <property type="match status" value="1"/>
</dbReference>
<dbReference type="PROSITE" id="PS51278">
    <property type="entry name" value="GATASE_TYPE_2"/>
    <property type="match status" value="1"/>
</dbReference>
<dbReference type="PROSITE" id="PS51464">
    <property type="entry name" value="SIS"/>
    <property type="match status" value="2"/>
</dbReference>
<name>GLMS_STRCO</name>